<gene>
    <name type="primary">APL3</name>
    <name type="ordered locus">At4g39210</name>
    <name type="ORF">T22F8.110</name>
</gene>
<feature type="transit peptide" description="Chloroplast" evidence="1">
    <location>
        <begin position="1"/>
        <end position="61"/>
    </location>
</feature>
<feature type="chain" id="PRO_0000011161" description="Glucose-1-phosphate adenylyltransferase large subunit 3, chloroplastic">
    <location>
        <begin position="62"/>
        <end position="521"/>
    </location>
</feature>
<feature type="sequence conflict" description="In Ref. 5." evidence="1" ref="5">
    <original>S</original>
    <variation>Y</variation>
    <location>
        <position position="296"/>
    </location>
</feature>
<feature type="sequence conflict" description="In Ref. 5; CAA51776." evidence="1" ref="5">
    <original>S</original>
    <variation>G</variation>
    <location>
        <position position="301"/>
    </location>
</feature>
<feature type="sequence conflict" description="In Ref. 5; CAA51776." evidence="1" ref="5">
    <original>N</original>
    <variation>S</variation>
    <location>
        <position position="362"/>
    </location>
</feature>
<feature type="sequence conflict" description="In Ref. 5; CAA51776." evidence="1" ref="5">
    <original>IAS</original>
    <variation>SR</variation>
    <location>
        <begin position="448"/>
        <end position="450"/>
    </location>
</feature>
<feature type="sequence conflict" description="In Ref. 5; CAA51776." evidence="1" ref="5">
    <original>K</original>
    <variation>R</variation>
    <location>
        <position position="477"/>
    </location>
</feature>
<accession>P55231</accession>
<accession>Q9ZR38</accession>
<name>GLGL3_ARATH</name>
<comment type="function">
    <text>This protein plays a role in synthesis of starch. It catalyzes the synthesis of the activated glycosyl donor, ADP-glucose from Glc-1-P and ATP.</text>
</comment>
<comment type="catalytic activity">
    <reaction>
        <text>alpha-D-glucose 1-phosphate + ATP + H(+) = ADP-alpha-D-glucose + diphosphate</text>
        <dbReference type="Rhea" id="RHEA:12120"/>
        <dbReference type="ChEBI" id="CHEBI:15378"/>
        <dbReference type="ChEBI" id="CHEBI:30616"/>
        <dbReference type="ChEBI" id="CHEBI:33019"/>
        <dbReference type="ChEBI" id="CHEBI:57498"/>
        <dbReference type="ChEBI" id="CHEBI:58601"/>
        <dbReference type="EC" id="2.7.7.27"/>
    </reaction>
</comment>
<comment type="activity regulation">
    <text>Activated by 3'phosphoglycerate, inhibited by orthophosphate. Allosteric regulation.</text>
</comment>
<comment type="pathway">
    <text>Glycan biosynthesis; starch biosynthesis.</text>
</comment>
<comment type="subunit">
    <text>Heterotetramer.</text>
</comment>
<comment type="subcellular location">
    <subcellularLocation>
        <location>Plastid</location>
        <location>Chloroplast</location>
    </subcellularLocation>
</comment>
<comment type="tissue specificity">
    <text>Probably are expressed in roots, flowers and/or seeds.</text>
</comment>
<comment type="similarity">
    <text evidence="1">Belongs to the bacterial/plant glucose-1-phosphate adenylyltransferase family.</text>
</comment>
<dbReference type="EC" id="2.7.7.27"/>
<dbReference type="EMBL" id="Y18432">
    <property type="protein sequence ID" value="CAA77173.1"/>
    <property type="molecule type" value="Genomic_DNA"/>
</dbReference>
<dbReference type="EMBL" id="AL050351">
    <property type="protein sequence ID" value="CAB43636.1"/>
    <property type="molecule type" value="Genomic_DNA"/>
</dbReference>
<dbReference type="EMBL" id="AL161594">
    <property type="protein sequence ID" value="CAB80584.1"/>
    <property type="molecule type" value="Genomic_DNA"/>
</dbReference>
<dbReference type="EMBL" id="CP002687">
    <property type="protein sequence ID" value="AEE87038.1"/>
    <property type="molecule type" value="Genomic_DNA"/>
</dbReference>
<dbReference type="EMBL" id="CP002687">
    <property type="protein sequence ID" value="ANM66846.1"/>
    <property type="molecule type" value="Genomic_DNA"/>
</dbReference>
<dbReference type="EMBL" id="AY059862">
    <property type="protein sequence ID" value="AAL24344.1"/>
    <property type="molecule type" value="mRNA"/>
</dbReference>
<dbReference type="EMBL" id="BT010378">
    <property type="protein sequence ID" value="AAQ56821.1"/>
    <property type="molecule type" value="mRNA"/>
</dbReference>
<dbReference type="EMBL" id="X73364">
    <property type="protein sequence ID" value="CAA51776.1"/>
    <property type="molecule type" value="mRNA"/>
</dbReference>
<dbReference type="PIR" id="T08569">
    <property type="entry name" value="T08569"/>
</dbReference>
<dbReference type="RefSeq" id="NP_001328715.1">
    <property type="nucleotide sequence ID" value="NM_001342527.1"/>
</dbReference>
<dbReference type="RefSeq" id="NP_195632.1">
    <property type="nucleotide sequence ID" value="NM_120081.2"/>
</dbReference>
<dbReference type="SMR" id="P55231"/>
<dbReference type="FunCoup" id="P55231">
    <property type="interactions" value="288"/>
</dbReference>
<dbReference type="STRING" id="3702.P55231"/>
<dbReference type="iPTMnet" id="P55231"/>
<dbReference type="PaxDb" id="3702-AT4G39210.1"/>
<dbReference type="ProteomicsDB" id="220663"/>
<dbReference type="EnsemblPlants" id="AT4G39210.1">
    <property type="protein sequence ID" value="AT4G39210.1"/>
    <property type="gene ID" value="AT4G39210"/>
</dbReference>
<dbReference type="EnsemblPlants" id="AT4G39210.2">
    <property type="protein sequence ID" value="AT4G39210.2"/>
    <property type="gene ID" value="AT4G39210"/>
</dbReference>
<dbReference type="GeneID" id="830076"/>
<dbReference type="Gramene" id="AT4G39210.1">
    <property type="protein sequence ID" value="AT4G39210.1"/>
    <property type="gene ID" value="AT4G39210"/>
</dbReference>
<dbReference type="Gramene" id="AT4G39210.2">
    <property type="protein sequence ID" value="AT4G39210.2"/>
    <property type="gene ID" value="AT4G39210"/>
</dbReference>
<dbReference type="KEGG" id="ath:AT4G39210"/>
<dbReference type="Araport" id="AT4G39210"/>
<dbReference type="TAIR" id="AT4G39210">
    <property type="gene designation" value="APL3"/>
</dbReference>
<dbReference type="eggNOG" id="KOG1322">
    <property type="taxonomic scope" value="Eukaryota"/>
</dbReference>
<dbReference type="HOGENOM" id="CLU_029499_14_4_1"/>
<dbReference type="InParanoid" id="P55231"/>
<dbReference type="OMA" id="FFNDYWE"/>
<dbReference type="OrthoDB" id="1733332at2759"/>
<dbReference type="PhylomeDB" id="P55231"/>
<dbReference type="BRENDA" id="2.7.7.27">
    <property type="organism ID" value="399"/>
</dbReference>
<dbReference type="SABIO-RK" id="P55231"/>
<dbReference type="UniPathway" id="UPA00152"/>
<dbReference type="PRO" id="PR:P55231"/>
<dbReference type="Proteomes" id="UP000006548">
    <property type="component" value="Chromosome 4"/>
</dbReference>
<dbReference type="ExpressionAtlas" id="P55231">
    <property type="expression patterns" value="baseline and differential"/>
</dbReference>
<dbReference type="GO" id="GO:0009507">
    <property type="term" value="C:chloroplast"/>
    <property type="evidence" value="ECO:0007669"/>
    <property type="project" value="UniProtKB-SubCell"/>
</dbReference>
<dbReference type="GO" id="GO:0005524">
    <property type="term" value="F:ATP binding"/>
    <property type="evidence" value="ECO:0007669"/>
    <property type="project" value="UniProtKB-KW"/>
</dbReference>
<dbReference type="GO" id="GO:0008878">
    <property type="term" value="F:glucose-1-phosphate adenylyltransferase activity"/>
    <property type="evidence" value="ECO:0000250"/>
    <property type="project" value="TAIR"/>
</dbReference>
<dbReference type="GO" id="GO:0005978">
    <property type="term" value="P:glycogen biosynthetic process"/>
    <property type="evidence" value="ECO:0007669"/>
    <property type="project" value="InterPro"/>
</dbReference>
<dbReference type="GO" id="GO:0019252">
    <property type="term" value="P:starch biosynthetic process"/>
    <property type="evidence" value="ECO:0000304"/>
    <property type="project" value="TAIR"/>
</dbReference>
<dbReference type="CDD" id="cd02508">
    <property type="entry name" value="ADP_Glucose_PP"/>
    <property type="match status" value="1"/>
</dbReference>
<dbReference type="CDD" id="cd04651">
    <property type="entry name" value="LbH_G1P_AT_C"/>
    <property type="match status" value="1"/>
</dbReference>
<dbReference type="FunFam" id="2.160.10.10:FF:000010">
    <property type="entry name" value="Glucose-1-phosphate adenylyltransferase"/>
    <property type="match status" value="1"/>
</dbReference>
<dbReference type="FunFam" id="3.90.550.10:FF:000030">
    <property type="entry name" value="Glucose-1-phosphate adenylyltransferase"/>
    <property type="match status" value="1"/>
</dbReference>
<dbReference type="Gene3D" id="2.160.10.10">
    <property type="entry name" value="Hexapeptide repeat proteins"/>
    <property type="match status" value="1"/>
</dbReference>
<dbReference type="Gene3D" id="3.90.550.10">
    <property type="entry name" value="Spore Coat Polysaccharide Biosynthesis Protein SpsA, Chain A"/>
    <property type="match status" value="1"/>
</dbReference>
<dbReference type="InterPro" id="IPR011831">
    <property type="entry name" value="ADP-Glc_PPase"/>
</dbReference>
<dbReference type="InterPro" id="IPR005836">
    <property type="entry name" value="ADP_Glu_pyroP_CS"/>
</dbReference>
<dbReference type="InterPro" id="IPR005835">
    <property type="entry name" value="NTP_transferase_dom"/>
</dbReference>
<dbReference type="InterPro" id="IPR029044">
    <property type="entry name" value="Nucleotide-diphossugar_trans"/>
</dbReference>
<dbReference type="InterPro" id="IPR011004">
    <property type="entry name" value="Trimer_LpxA-like_sf"/>
</dbReference>
<dbReference type="NCBIfam" id="TIGR02091">
    <property type="entry name" value="glgC"/>
    <property type="match status" value="1"/>
</dbReference>
<dbReference type="NCBIfam" id="NF002772">
    <property type="entry name" value="PRK02862.1"/>
    <property type="match status" value="1"/>
</dbReference>
<dbReference type="PANTHER" id="PTHR43523:SF4">
    <property type="entry name" value="GLUCOSE-1-PHOSPHATE ADENYLYLTRANSFERASE LARGE SUBUNIT 3, CHLOROPLASTIC"/>
    <property type="match status" value="1"/>
</dbReference>
<dbReference type="PANTHER" id="PTHR43523">
    <property type="entry name" value="GLUCOSE-1-PHOSPHATE ADENYLYLTRANSFERASE-RELATED"/>
    <property type="match status" value="1"/>
</dbReference>
<dbReference type="Pfam" id="PF25247">
    <property type="entry name" value="LbH_GLGC"/>
    <property type="match status" value="1"/>
</dbReference>
<dbReference type="Pfam" id="PF00483">
    <property type="entry name" value="NTP_transferase"/>
    <property type="match status" value="1"/>
</dbReference>
<dbReference type="SUPFAM" id="SSF53448">
    <property type="entry name" value="Nucleotide-diphospho-sugar transferases"/>
    <property type="match status" value="1"/>
</dbReference>
<dbReference type="SUPFAM" id="SSF51161">
    <property type="entry name" value="Trimeric LpxA-like enzymes"/>
    <property type="match status" value="1"/>
</dbReference>
<dbReference type="PROSITE" id="PS00808">
    <property type="entry name" value="ADP_GLC_PYROPHOSPH_1"/>
    <property type="match status" value="1"/>
</dbReference>
<dbReference type="PROSITE" id="PS00809">
    <property type="entry name" value="ADP_GLC_PYROPHOSPH_2"/>
    <property type="match status" value="1"/>
</dbReference>
<dbReference type="PROSITE" id="PS00810">
    <property type="entry name" value="ADP_GLC_PYROPHOSPH_3"/>
    <property type="match status" value="1"/>
</dbReference>
<reference key="1">
    <citation type="journal article" date="2001" name="Plant J.">
        <title>Impaired sucrose-induction mutants reveal the modulation of sugar-induced starch biosynthetic gene expression by abscisic acid signalling.</title>
        <authorList>
            <person name="Rook F."/>
            <person name="Corke F."/>
            <person name="Card R."/>
            <person name="Munz G."/>
            <person name="Smith C."/>
            <person name="Bevan M.W."/>
        </authorList>
    </citation>
    <scope>NUCLEOTIDE SEQUENCE [GENOMIC DNA]</scope>
    <source>
        <strain>cv. Columbia</strain>
    </source>
</reference>
<reference key="2">
    <citation type="journal article" date="1999" name="Nature">
        <title>Sequence and analysis of chromosome 4 of the plant Arabidopsis thaliana.</title>
        <authorList>
            <person name="Mayer K.F.X."/>
            <person name="Schueller C."/>
            <person name="Wambutt R."/>
            <person name="Murphy G."/>
            <person name="Volckaert G."/>
            <person name="Pohl T."/>
            <person name="Duesterhoeft A."/>
            <person name="Stiekema W."/>
            <person name="Entian K.-D."/>
            <person name="Terryn N."/>
            <person name="Harris B."/>
            <person name="Ansorge W."/>
            <person name="Brandt P."/>
            <person name="Grivell L.A."/>
            <person name="Rieger M."/>
            <person name="Weichselgartner M."/>
            <person name="de Simone V."/>
            <person name="Obermaier B."/>
            <person name="Mache R."/>
            <person name="Mueller M."/>
            <person name="Kreis M."/>
            <person name="Delseny M."/>
            <person name="Puigdomenech P."/>
            <person name="Watson M."/>
            <person name="Schmidtheini T."/>
            <person name="Reichert B."/>
            <person name="Portetelle D."/>
            <person name="Perez-Alonso M."/>
            <person name="Boutry M."/>
            <person name="Bancroft I."/>
            <person name="Vos P."/>
            <person name="Hoheisel J."/>
            <person name="Zimmermann W."/>
            <person name="Wedler H."/>
            <person name="Ridley P."/>
            <person name="Langham S.-A."/>
            <person name="McCullagh B."/>
            <person name="Bilham L."/>
            <person name="Robben J."/>
            <person name="van der Schueren J."/>
            <person name="Grymonprez B."/>
            <person name="Chuang Y.-J."/>
            <person name="Vandenbussche F."/>
            <person name="Braeken M."/>
            <person name="Weltjens I."/>
            <person name="Voet M."/>
            <person name="Bastiaens I."/>
            <person name="Aert R."/>
            <person name="Defoor E."/>
            <person name="Weitzenegger T."/>
            <person name="Bothe G."/>
            <person name="Ramsperger U."/>
            <person name="Hilbert H."/>
            <person name="Braun M."/>
            <person name="Holzer E."/>
            <person name="Brandt A."/>
            <person name="Peters S."/>
            <person name="van Staveren M."/>
            <person name="Dirkse W."/>
            <person name="Mooijman P."/>
            <person name="Klein Lankhorst R."/>
            <person name="Rose M."/>
            <person name="Hauf J."/>
            <person name="Koetter P."/>
            <person name="Berneiser S."/>
            <person name="Hempel S."/>
            <person name="Feldpausch M."/>
            <person name="Lamberth S."/>
            <person name="Van den Daele H."/>
            <person name="De Keyser A."/>
            <person name="Buysshaert C."/>
            <person name="Gielen J."/>
            <person name="Villarroel R."/>
            <person name="De Clercq R."/>
            <person name="van Montagu M."/>
            <person name="Rogers J."/>
            <person name="Cronin A."/>
            <person name="Quail M.A."/>
            <person name="Bray-Allen S."/>
            <person name="Clark L."/>
            <person name="Doggett J."/>
            <person name="Hall S."/>
            <person name="Kay M."/>
            <person name="Lennard N."/>
            <person name="McLay K."/>
            <person name="Mayes R."/>
            <person name="Pettett A."/>
            <person name="Rajandream M.A."/>
            <person name="Lyne M."/>
            <person name="Benes V."/>
            <person name="Rechmann S."/>
            <person name="Borkova D."/>
            <person name="Bloecker H."/>
            <person name="Scharfe M."/>
            <person name="Grimm M."/>
            <person name="Loehnert T.-H."/>
            <person name="Dose S."/>
            <person name="de Haan M."/>
            <person name="Maarse A.C."/>
            <person name="Schaefer M."/>
            <person name="Mueller-Auer S."/>
            <person name="Gabel C."/>
            <person name="Fuchs M."/>
            <person name="Fartmann B."/>
            <person name="Granderath K."/>
            <person name="Dauner D."/>
            <person name="Herzl A."/>
            <person name="Neumann S."/>
            <person name="Argiriou A."/>
            <person name="Vitale D."/>
            <person name="Liguori R."/>
            <person name="Piravandi E."/>
            <person name="Massenet O."/>
            <person name="Quigley F."/>
            <person name="Clabauld G."/>
            <person name="Muendlein A."/>
            <person name="Felber R."/>
            <person name="Schnabl S."/>
            <person name="Hiller R."/>
            <person name="Schmidt W."/>
            <person name="Lecharny A."/>
            <person name="Aubourg S."/>
            <person name="Chefdor F."/>
            <person name="Cooke R."/>
            <person name="Berger C."/>
            <person name="Monfort A."/>
            <person name="Casacuberta E."/>
            <person name="Gibbons T."/>
            <person name="Weber N."/>
            <person name="Vandenbol M."/>
            <person name="Bargues M."/>
            <person name="Terol J."/>
            <person name="Torres A."/>
            <person name="Perez-Perez A."/>
            <person name="Purnelle B."/>
            <person name="Bent E."/>
            <person name="Johnson S."/>
            <person name="Tacon D."/>
            <person name="Jesse T."/>
            <person name="Heijnen L."/>
            <person name="Schwarz S."/>
            <person name="Scholler P."/>
            <person name="Heber S."/>
            <person name="Francs P."/>
            <person name="Bielke C."/>
            <person name="Frishman D."/>
            <person name="Haase D."/>
            <person name="Lemcke K."/>
            <person name="Mewes H.-W."/>
            <person name="Stocker S."/>
            <person name="Zaccaria P."/>
            <person name="Bevan M."/>
            <person name="Wilson R.K."/>
            <person name="de la Bastide M."/>
            <person name="Habermann K."/>
            <person name="Parnell L."/>
            <person name="Dedhia N."/>
            <person name="Gnoj L."/>
            <person name="Schutz K."/>
            <person name="Huang E."/>
            <person name="Spiegel L."/>
            <person name="Sekhon M."/>
            <person name="Murray J."/>
            <person name="Sheet P."/>
            <person name="Cordes M."/>
            <person name="Abu-Threideh J."/>
            <person name="Stoneking T."/>
            <person name="Kalicki J."/>
            <person name="Graves T."/>
            <person name="Harmon G."/>
            <person name="Edwards J."/>
            <person name="Latreille P."/>
            <person name="Courtney L."/>
            <person name="Cloud J."/>
            <person name="Abbott A."/>
            <person name="Scott K."/>
            <person name="Johnson D."/>
            <person name="Minx P."/>
            <person name="Bentley D."/>
            <person name="Fulton B."/>
            <person name="Miller N."/>
            <person name="Greco T."/>
            <person name="Kemp K."/>
            <person name="Kramer J."/>
            <person name="Fulton L."/>
            <person name="Mardis E."/>
            <person name="Dante M."/>
            <person name="Pepin K."/>
            <person name="Hillier L.W."/>
            <person name="Nelson J."/>
            <person name="Spieth J."/>
            <person name="Ryan E."/>
            <person name="Andrews S."/>
            <person name="Geisel C."/>
            <person name="Layman D."/>
            <person name="Du H."/>
            <person name="Ali J."/>
            <person name="Berghoff A."/>
            <person name="Jones K."/>
            <person name="Drone K."/>
            <person name="Cotton M."/>
            <person name="Joshu C."/>
            <person name="Antonoiu B."/>
            <person name="Zidanic M."/>
            <person name="Strong C."/>
            <person name="Sun H."/>
            <person name="Lamar B."/>
            <person name="Yordan C."/>
            <person name="Ma P."/>
            <person name="Zhong J."/>
            <person name="Preston R."/>
            <person name="Vil D."/>
            <person name="Shekher M."/>
            <person name="Matero A."/>
            <person name="Shah R."/>
            <person name="Swaby I.K."/>
            <person name="O'Shaughnessy A."/>
            <person name="Rodriguez M."/>
            <person name="Hoffman J."/>
            <person name="Till S."/>
            <person name="Granat S."/>
            <person name="Shohdy N."/>
            <person name="Hasegawa A."/>
            <person name="Hameed A."/>
            <person name="Lodhi M."/>
            <person name="Johnson A."/>
            <person name="Chen E."/>
            <person name="Marra M.A."/>
            <person name="Martienssen R."/>
            <person name="McCombie W.R."/>
        </authorList>
    </citation>
    <scope>NUCLEOTIDE SEQUENCE [LARGE SCALE GENOMIC DNA]</scope>
    <source>
        <strain>cv. Columbia</strain>
    </source>
</reference>
<reference key="3">
    <citation type="journal article" date="2017" name="Plant J.">
        <title>Araport11: a complete reannotation of the Arabidopsis thaliana reference genome.</title>
        <authorList>
            <person name="Cheng C.Y."/>
            <person name="Krishnakumar V."/>
            <person name="Chan A.P."/>
            <person name="Thibaud-Nissen F."/>
            <person name="Schobel S."/>
            <person name="Town C.D."/>
        </authorList>
    </citation>
    <scope>GENOME REANNOTATION</scope>
    <source>
        <strain>cv. Columbia</strain>
    </source>
</reference>
<reference key="4">
    <citation type="journal article" date="2003" name="Science">
        <title>Empirical analysis of transcriptional activity in the Arabidopsis genome.</title>
        <authorList>
            <person name="Yamada K."/>
            <person name="Lim J."/>
            <person name="Dale J.M."/>
            <person name="Chen H."/>
            <person name="Shinn P."/>
            <person name="Palm C.J."/>
            <person name="Southwick A.M."/>
            <person name="Wu H.C."/>
            <person name="Kim C.J."/>
            <person name="Nguyen M."/>
            <person name="Pham P.K."/>
            <person name="Cheuk R.F."/>
            <person name="Karlin-Newmann G."/>
            <person name="Liu S.X."/>
            <person name="Lam B."/>
            <person name="Sakano H."/>
            <person name="Wu T."/>
            <person name="Yu G."/>
            <person name="Miranda M."/>
            <person name="Quach H.L."/>
            <person name="Tripp M."/>
            <person name="Chang C.H."/>
            <person name="Lee J.M."/>
            <person name="Toriumi M.J."/>
            <person name="Chan M.M."/>
            <person name="Tang C.C."/>
            <person name="Onodera C.S."/>
            <person name="Deng J.M."/>
            <person name="Akiyama K."/>
            <person name="Ansari Y."/>
            <person name="Arakawa T."/>
            <person name="Banh J."/>
            <person name="Banno F."/>
            <person name="Bowser L."/>
            <person name="Brooks S.Y."/>
            <person name="Carninci P."/>
            <person name="Chao Q."/>
            <person name="Choy N."/>
            <person name="Enju A."/>
            <person name="Goldsmith A.D."/>
            <person name="Gurjal M."/>
            <person name="Hansen N.F."/>
            <person name="Hayashizaki Y."/>
            <person name="Johnson-Hopson C."/>
            <person name="Hsuan V.W."/>
            <person name="Iida K."/>
            <person name="Karnes M."/>
            <person name="Khan S."/>
            <person name="Koesema E."/>
            <person name="Ishida J."/>
            <person name="Jiang P.X."/>
            <person name="Jones T."/>
            <person name="Kawai J."/>
            <person name="Kamiya A."/>
            <person name="Meyers C."/>
            <person name="Nakajima M."/>
            <person name="Narusaka M."/>
            <person name="Seki M."/>
            <person name="Sakurai T."/>
            <person name="Satou M."/>
            <person name="Tamse R."/>
            <person name="Vaysberg M."/>
            <person name="Wallender E.K."/>
            <person name="Wong C."/>
            <person name="Yamamura Y."/>
            <person name="Yuan S."/>
            <person name="Shinozaki K."/>
            <person name="Davis R.W."/>
            <person name="Theologis A."/>
            <person name="Ecker J.R."/>
        </authorList>
    </citation>
    <scope>NUCLEOTIDE SEQUENCE [LARGE SCALE MRNA]</scope>
    <source>
        <strain>cv. Columbia</strain>
    </source>
</reference>
<reference key="5">
    <citation type="journal article" date="1993" name="Plant Mol. Biol.">
        <title>Molecular characterization of multiple cDNA clones for ADP-glucose pyrophosphorylase from Arabidopsis thaliana.</title>
        <authorList>
            <person name="Villand P."/>
            <person name="Olsen O.-A."/>
            <person name="Kleczkowski L.A."/>
        </authorList>
    </citation>
    <scope>NUCLEOTIDE SEQUENCE [MRNA] OF 296-479</scope>
    <source>
        <strain>cv. Columbia</strain>
    </source>
</reference>
<organism>
    <name type="scientific">Arabidopsis thaliana</name>
    <name type="common">Mouse-ear cress</name>
    <dbReference type="NCBI Taxonomy" id="3702"/>
    <lineage>
        <taxon>Eukaryota</taxon>
        <taxon>Viridiplantae</taxon>
        <taxon>Streptophyta</taxon>
        <taxon>Embryophyta</taxon>
        <taxon>Tracheophyta</taxon>
        <taxon>Spermatophyta</taxon>
        <taxon>Magnoliopsida</taxon>
        <taxon>eudicotyledons</taxon>
        <taxon>Gunneridae</taxon>
        <taxon>Pentapetalae</taxon>
        <taxon>rosids</taxon>
        <taxon>malvids</taxon>
        <taxon>Brassicales</taxon>
        <taxon>Brassicaceae</taxon>
        <taxon>Camelineae</taxon>
        <taxon>Arabidopsis</taxon>
    </lineage>
</organism>
<sequence>MDSCCNFSLGTKTVLAKDSFKNVENKFLGEKIKGSVLKPFSSDLSSKKFRNRKLRPGVAYAIATSKNAKEALKNQPSMFERRRADPKNVAAIILGGGDGAKLFPLTKRAATPAVPVGGCYRMIDIPMSNCINSCINKIFVLTQFNSASLNRHLARTYFGNGINFGDGFVEVLAATQTPGEAGKKWFQGTADAVRKFLWVFEDAKNRNIENIIILSGDHLYRMNYMDFVQHHVDSKADITLSCAPVDESRASEYGLVNIDRSGRVVHFSEKPTGIDLKSMQTDTTMHGLSHQEAAKSPYIASMGVYCFKTEALLKLLTWRYPSSNDFGSEIIPAAIKDHNVQGYIYRDYWEDIGTIKSFYEANIALVEEHPKFEFYDQNTPFYTSPRFLPPTKTEKCRIVNSVISHGCFLGECSIQRSIIGERSRLDYGVELQDTLMLGADSYQTESEIASLLAEGNVPIGIGRDTKIRKCIIDKNAKIGKNVVIMNKDDVKEADRPEEGFYIRSGITVVVEKATIKDGTVI</sequence>
<protein>
    <recommendedName>
        <fullName>Glucose-1-phosphate adenylyltransferase large subunit 3, chloroplastic</fullName>
        <ecNumber>2.7.7.27</ecNumber>
    </recommendedName>
    <alternativeName>
        <fullName>ADP-glucose pyrophosphorylase</fullName>
    </alternativeName>
    <alternativeName>
        <fullName>ADP-glucose synthase</fullName>
    </alternativeName>
    <alternativeName>
        <fullName>AGPase S</fullName>
    </alternativeName>
    <alternativeName>
        <fullName>Alpha-D-glucose-1-phosphate adenyl transferase</fullName>
    </alternativeName>
</protein>
<evidence type="ECO:0000305" key="1"/>
<keyword id="KW-0021">Allosteric enzyme</keyword>
<keyword id="KW-0067">ATP-binding</keyword>
<keyword id="KW-0150">Chloroplast</keyword>
<keyword id="KW-0547">Nucleotide-binding</keyword>
<keyword id="KW-0548">Nucleotidyltransferase</keyword>
<keyword id="KW-0934">Plastid</keyword>
<keyword id="KW-1185">Reference proteome</keyword>
<keyword id="KW-0750">Starch biosynthesis</keyword>
<keyword id="KW-0808">Transferase</keyword>
<keyword id="KW-0809">Transit peptide</keyword>
<proteinExistence type="evidence at transcript level"/>